<dbReference type="EMBL" id="BA000031">
    <property type="protein sequence ID" value="BAC59062.1"/>
    <property type="molecule type" value="Genomic_DNA"/>
</dbReference>
<dbReference type="RefSeq" id="NP_797178.1">
    <property type="nucleotide sequence ID" value="NC_004603.1"/>
</dbReference>
<dbReference type="RefSeq" id="WP_005478499.1">
    <property type="nucleotide sequence ID" value="NC_004603.1"/>
</dbReference>
<dbReference type="SMR" id="Q87RJ5"/>
<dbReference type="GeneID" id="1188296"/>
<dbReference type="KEGG" id="vpa:VP0799"/>
<dbReference type="PATRIC" id="fig|223926.6.peg.760"/>
<dbReference type="eggNOG" id="COG3115">
    <property type="taxonomic scope" value="Bacteria"/>
</dbReference>
<dbReference type="HOGENOM" id="CLU_030174_1_0_6"/>
<dbReference type="Proteomes" id="UP000002493">
    <property type="component" value="Chromosome 1"/>
</dbReference>
<dbReference type="GO" id="GO:0032153">
    <property type="term" value="C:cell division site"/>
    <property type="evidence" value="ECO:0007669"/>
    <property type="project" value="UniProtKB-UniRule"/>
</dbReference>
<dbReference type="GO" id="GO:0005886">
    <property type="term" value="C:plasma membrane"/>
    <property type="evidence" value="ECO:0007669"/>
    <property type="project" value="UniProtKB-SubCell"/>
</dbReference>
<dbReference type="GO" id="GO:0000917">
    <property type="term" value="P:division septum assembly"/>
    <property type="evidence" value="ECO:0007669"/>
    <property type="project" value="TreeGrafter"/>
</dbReference>
<dbReference type="GO" id="GO:0043093">
    <property type="term" value="P:FtsZ-dependent cytokinesis"/>
    <property type="evidence" value="ECO:0007669"/>
    <property type="project" value="UniProtKB-UniRule"/>
</dbReference>
<dbReference type="Gene3D" id="3.30.1400.10">
    <property type="entry name" value="ZipA, C-terminal FtsZ-binding domain"/>
    <property type="match status" value="1"/>
</dbReference>
<dbReference type="HAMAP" id="MF_00509">
    <property type="entry name" value="ZipA"/>
    <property type="match status" value="1"/>
</dbReference>
<dbReference type="InterPro" id="IPR011919">
    <property type="entry name" value="Cell_div_ZipA"/>
</dbReference>
<dbReference type="InterPro" id="IPR007449">
    <property type="entry name" value="ZipA_FtsZ-bd_C"/>
</dbReference>
<dbReference type="InterPro" id="IPR036765">
    <property type="entry name" value="ZipA_FtsZ-bd_C_sf"/>
</dbReference>
<dbReference type="NCBIfam" id="TIGR02205">
    <property type="entry name" value="septum_zipA"/>
    <property type="match status" value="1"/>
</dbReference>
<dbReference type="PANTHER" id="PTHR38685">
    <property type="entry name" value="CELL DIVISION PROTEIN ZIPA"/>
    <property type="match status" value="1"/>
</dbReference>
<dbReference type="PANTHER" id="PTHR38685:SF1">
    <property type="entry name" value="CELL DIVISION PROTEIN ZIPA"/>
    <property type="match status" value="1"/>
</dbReference>
<dbReference type="Pfam" id="PF04354">
    <property type="entry name" value="ZipA_C"/>
    <property type="match status" value="1"/>
</dbReference>
<dbReference type="SMART" id="SM00771">
    <property type="entry name" value="ZipA_C"/>
    <property type="match status" value="1"/>
</dbReference>
<dbReference type="SUPFAM" id="SSF64383">
    <property type="entry name" value="Cell-division protein ZipA, C-terminal domain"/>
    <property type="match status" value="1"/>
</dbReference>
<name>ZIPA_VIBPA</name>
<keyword id="KW-0131">Cell cycle</keyword>
<keyword id="KW-0132">Cell division</keyword>
<keyword id="KW-0997">Cell inner membrane</keyword>
<keyword id="KW-1003">Cell membrane</keyword>
<keyword id="KW-0472">Membrane</keyword>
<keyword id="KW-0812">Transmembrane</keyword>
<keyword id="KW-1133">Transmembrane helix</keyword>
<sequence>MQELRFVLIVVGALAIAALLFHGLWSSKKEGKAKFGNKPLGKLDVDQGDKDSVEQERSFAPATEDDFEIIRKDRKEPDFGMENTFDSKFEADPLLGGVAEEKHSVKEEAEEIPSFVAMKNDVEDVAIQPSEVEEPMQEVVEEEIMPSAFDAPKQEMEMVEEVAPAVVEQPEEPKPEPEMQVIVLNVHCAGEEPFIGTELFDSMQQNGLIYGEMHIFHRHVDLSGNGKVLFSVANMMHPGTLEHGDPAEFSTKGISFFMTLPCYGEAEQNFNLMLRTAQQIADDMGGNVLDDKRNLMTPDRLAAYRRQIVEFNAANA</sequence>
<organism>
    <name type="scientific">Vibrio parahaemolyticus serotype O3:K6 (strain RIMD 2210633)</name>
    <dbReference type="NCBI Taxonomy" id="223926"/>
    <lineage>
        <taxon>Bacteria</taxon>
        <taxon>Pseudomonadati</taxon>
        <taxon>Pseudomonadota</taxon>
        <taxon>Gammaproteobacteria</taxon>
        <taxon>Vibrionales</taxon>
        <taxon>Vibrionaceae</taxon>
        <taxon>Vibrio</taxon>
    </lineage>
</organism>
<proteinExistence type="inferred from homology"/>
<feature type="chain" id="PRO_0000214539" description="Cell division protein ZipA">
    <location>
        <begin position="1"/>
        <end position="316"/>
    </location>
</feature>
<feature type="topological domain" description="Periplasmic" evidence="1">
    <location>
        <begin position="1"/>
        <end position="5"/>
    </location>
</feature>
<feature type="transmembrane region" description="Helical" evidence="1">
    <location>
        <begin position="6"/>
        <end position="26"/>
    </location>
</feature>
<feature type="topological domain" description="Cytoplasmic" evidence="1">
    <location>
        <begin position="27"/>
        <end position="316"/>
    </location>
</feature>
<feature type="region of interest" description="Disordered" evidence="2">
    <location>
        <begin position="36"/>
        <end position="65"/>
    </location>
</feature>
<feature type="compositionally biased region" description="Basic and acidic residues" evidence="2">
    <location>
        <begin position="41"/>
        <end position="57"/>
    </location>
</feature>
<comment type="function">
    <text evidence="1">Essential cell division protein that stabilizes the FtsZ protofilaments by cross-linking them and that serves as a cytoplasmic membrane anchor for the Z ring. Also required for the recruitment to the septal ring of downstream cell division proteins.</text>
</comment>
<comment type="subunit">
    <text evidence="1">Interacts with FtsZ via their C-terminal domains.</text>
</comment>
<comment type="subcellular location">
    <subcellularLocation>
        <location evidence="1">Cell inner membrane</location>
        <topology evidence="1">Single-pass type I membrane protein</topology>
    </subcellularLocation>
    <text evidence="1">Localizes to the Z ring in an FtsZ-dependent manner.</text>
</comment>
<comment type="similarity">
    <text evidence="1">Belongs to the ZipA family.</text>
</comment>
<reference key="1">
    <citation type="journal article" date="2003" name="Lancet">
        <title>Genome sequence of Vibrio parahaemolyticus: a pathogenic mechanism distinct from that of V. cholerae.</title>
        <authorList>
            <person name="Makino K."/>
            <person name="Oshima K."/>
            <person name="Kurokawa K."/>
            <person name="Yokoyama K."/>
            <person name="Uda T."/>
            <person name="Tagomori K."/>
            <person name="Iijima Y."/>
            <person name="Najima M."/>
            <person name="Nakano M."/>
            <person name="Yamashita A."/>
            <person name="Kubota Y."/>
            <person name="Kimura S."/>
            <person name="Yasunaga T."/>
            <person name="Honda T."/>
            <person name="Shinagawa H."/>
            <person name="Hattori M."/>
            <person name="Iida T."/>
        </authorList>
    </citation>
    <scope>NUCLEOTIDE SEQUENCE [LARGE SCALE GENOMIC DNA]</scope>
    <source>
        <strain>RIMD 2210633</strain>
    </source>
</reference>
<gene>
    <name evidence="1" type="primary">zipA</name>
    <name type="ordered locus">VP0799</name>
</gene>
<accession>Q87RJ5</accession>
<protein>
    <recommendedName>
        <fullName evidence="1">Cell division protein ZipA</fullName>
    </recommendedName>
</protein>
<evidence type="ECO:0000255" key="1">
    <source>
        <dbReference type="HAMAP-Rule" id="MF_00509"/>
    </source>
</evidence>
<evidence type="ECO:0000256" key="2">
    <source>
        <dbReference type="SAM" id="MobiDB-lite"/>
    </source>
</evidence>